<accession>B8ZMG1</accession>
<dbReference type="EC" id="5.1.1.1" evidence="1"/>
<dbReference type="EMBL" id="FM211187">
    <property type="protein sequence ID" value="CAR69468.1"/>
    <property type="molecule type" value="Genomic_DNA"/>
</dbReference>
<dbReference type="RefSeq" id="WP_000648075.1">
    <property type="nucleotide sequence ID" value="NC_011900.1"/>
</dbReference>
<dbReference type="SMR" id="B8ZMG1"/>
<dbReference type="KEGG" id="sne:SPN23F16970"/>
<dbReference type="HOGENOM" id="CLU_028393_2_1_9"/>
<dbReference type="UniPathway" id="UPA00042">
    <property type="reaction ID" value="UER00497"/>
</dbReference>
<dbReference type="GO" id="GO:0005829">
    <property type="term" value="C:cytosol"/>
    <property type="evidence" value="ECO:0007669"/>
    <property type="project" value="TreeGrafter"/>
</dbReference>
<dbReference type="GO" id="GO:0008784">
    <property type="term" value="F:alanine racemase activity"/>
    <property type="evidence" value="ECO:0007669"/>
    <property type="project" value="UniProtKB-UniRule"/>
</dbReference>
<dbReference type="GO" id="GO:0030170">
    <property type="term" value="F:pyridoxal phosphate binding"/>
    <property type="evidence" value="ECO:0007669"/>
    <property type="project" value="UniProtKB-UniRule"/>
</dbReference>
<dbReference type="GO" id="GO:0030632">
    <property type="term" value="P:D-alanine biosynthetic process"/>
    <property type="evidence" value="ECO:0007669"/>
    <property type="project" value="UniProtKB-UniRule"/>
</dbReference>
<dbReference type="GO" id="GO:0009252">
    <property type="term" value="P:peptidoglycan biosynthetic process"/>
    <property type="evidence" value="ECO:0007669"/>
    <property type="project" value="TreeGrafter"/>
</dbReference>
<dbReference type="CDD" id="cd00430">
    <property type="entry name" value="PLPDE_III_AR"/>
    <property type="match status" value="1"/>
</dbReference>
<dbReference type="FunFam" id="2.40.37.10:FF:000006">
    <property type="entry name" value="Alanine racemase"/>
    <property type="match status" value="1"/>
</dbReference>
<dbReference type="FunFam" id="3.20.20.10:FF:000002">
    <property type="entry name" value="Alanine racemase"/>
    <property type="match status" value="1"/>
</dbReference>
<dbReference type="Gene3D" id="3.20.20.10">
    <property type="entry name" value="Alanine racemase"/>
    <property type="match status" value="1"/>
</dbReference>
<dbReference type="Gene3D" id="2.40.37.10">
    <property type="entry name" value="Lyase, Ornithine Decarboxylase, Chain A, domain 1"/>
    <property type="match status" value="1"/>
</dbReference>
<dbReference type="HAMAP" id="MF_01201">
    <property type="entry name" value="Ala_racemase"/>
    <property type="match status" value="1"/>
</dbReference>
<dbReference type="InterPro" id="IPR000821">
    <property type="entry name" value="Ala_racemase"/>
</dbReference>
<dbReference type="InterPro" id="IPR009006">
    <property type="entry name" value="Ala_racemase/Decarboxylase_C"/>
</dbReference>
<dbReference type="InterPro" id="IPR011079">
    <property type="entry name" value="Ala_racemase_C"/>
</dbReference>
<dbReference type="InterPro" id="IPR001608">
    <property type="entry name" value="Ala_racemase_N"/>
</dbReference>
<dbReference type="InterPro" id="IPR020622">
    <property type="entry name" value="Ala_racemase_pyridoxalP-BS"/>
</dbReference>
<dbReference type="InterPro" id="IPR029066">
    <property type="entry name" value="PLP-binding_barrel"/>
</dbReference>
<dbReference type="NCBIfam" id="TIGR00492">
    <property type="entry name" value="alr"/>
    <property type="match status" value="1"/>
</dbReference>
<dbReference type="PANTHER" id="PTHR30511">
    <property type="entry name" value="ALANINE RACEMASE"/>
    <property type="match status" value="1"/>
</dbReference>
<dbReference type="PANTHER" id="PTHR30511:SF0">
    <property type="entry name" value="ALANINE RACEMASE, CATABOLIC-RELATED"/>
    <property type="match status" value="1"/>
</dbReference>
<dbReference type="Pfam" id="PF00842">
    <property type="entry name" value="Ala_racemase_C"/>
    <property type="match status" value="1"/>
</dbReference>
<dbReference type="Pfam" id="PF01168">
    <property type="entry name" value="Ala_racemase_N"/>
    <property type="match status" value="1"/>
</dbReference>
<dbReference type="PRINTS" id="PR00992">
    <property type="entry name" value="ALARACEMASE"/>
</dbReference>
<dbReference type="SMART" id="SM01005">
    <property type="entry name" value="Ala_racemase_C"/>
    <property type="match status" value="1"/>
</dbReference>
<dbReference type="SUPFAM" id="SSF50621">
    <property type="entry name" value="Alanine racemase C-terminal domain-like"/>
    <property type="match status" value="1"/>
</dbReference>
<dbReference type="SUPFAM" id="SSF51419">
    <property type="entry name" value="PLP-binding barrel"/>
    <property type="match status" value="1"/>
</dbReference>
<dbReference type="PROSITE" id="PS00395">
    <property type="entry name" value="ALANINE_RACEMASE"/>
    <property type="match status" value="1"/>
</dbReference>
<organism>
    <name type="scientific">Streptococcus pneumoniae (strain ATCC 700669 / Spain 23F-1)</name>
    <dbReference type="NCBI Taxonomy" id="561276"/>
    <lineage>
        <taxon>Bacteria</taxon>
        <taxon>Bacillati</taxon>
        <taxon>Bacillota</taxon>
        <taxon>Bacilli</taxon>
        <taxon>Lactobacillales</taxon>
        <taxon>Streptococcaceae</taxon>
        <taxon>Streptococcus</taxon>
    </lineage>
</organism>
<reference key="1">
    <citation type="journal article" date="2009" name="J. Bacteriol.">
        <title>Role of conjugative elements in the evolution of the multidrug-resistant pandemic clone Streptococcus pneumoniae Spain23F ST81.</title>
        <authorList>
            <person name="Croucher N.J."/>
            <person name="Walker D."/>
            <person name="Romero P."/>
            <person name="Lennard N."/>
            <person name="Paterson G.K."/>
            <person name="Bason N.C."/>
            <person name="Mitchell A.M."/>
            <person name="Quail M.A."/>
            <person name="Andrew P.W."/>
            <person name="Parkhill J."/>
            <person name="Bentley S.D."/>
            <person name="Mitchell T.J."/>
        </authorList>
    </citation>
    <scope>NUCLEOTIDE SEQUENCE [LARGE SCALE GENOMIC DNA]</scope>
    <source>
        <strain>ATCC 700669 / Spain 23F-1</strain>
    </source>
</reference>
<evidence type="ECO:0000255" key="1">
    <source>
        <dbReference type="HAMAP-Rule" id="MF_01201"/>
    </source>
</evidence>
<keyword id="KW-0413">Isomerase</keyword>
<keyword id="KW-0663">Pyridoxal phosphate</keyword>
<name>ALR_STRPJ</name>
<gene>
    <name type="primary">alr</name>
    <name type="ordered locus">SPN23F16970</name>
</gene>
<sequence>MKASPHRPTKALIHLGAIRQNIQQMGAHIPQGTLKLAVVKANAYGHGAVAVAKAIQDDVDGFCVSNIDEAIELRQAGLSKPILILGVSEIEAVALAKEYDFTLTVAGLEWIQALLDKEVDLTGLTVHLKIDSGMGRIGFREASEVEQAQDLLQQHGVCVEGIFTHFATADEESDDYFNAQLERFKTILASMKEVPELVHASNSATTLWHVETIFNAVRMGDAMYGLNPSGAVLDLPYDLIPALTLESALVHVKTVPAGACMGYGATYQADSEQVIATVPIGYADGWTRDMQNFSVLVDGQACPIVGRVSMDQITIRLPKLYPLGTKVTLIGSNGDKEITATQVATYRVTINYEVVCLLSDRIPREYY</sequence>
<comment type="function">
    <text evidence="1">Catalyzes the interconversion of L-alanine and D-alanine. May also act on other amino acids.</text>
</comment>
<comment type="catalytic activity">
    <reaction evidence="1">
        <text>L-alanine = D-alanine</text>
        <dbReference type="Rhea" id="RHEA:20249"/>
        <dbReference type="ChEBI" id="CHEBI:57416"/>
        <dbReference type="ChEBI" id="CHEBI:57972"/>
        <dbReference type="EC" id="5.1.1.1"/>
    </reaction>
</comment>
<comment type="cofactor">
    <cofactor evidence="1">
        <name>pyridoxal 5'-phosphate</name>
        <dbReference type="ChEBI" id="CHEBI:597326"/>
    </cofactor>
</comment>
<comment type="pathway">
    <text evidence="1">Amino-acid biosynthesis; D-alanine biosynthesis; D-alanine from L-alanine: step 1/1.</text>
</comment>
<comment type="similarity">
    <text evidence="1">Belongs to the alanine racemase family.</text>
</comment>
<proteinExistence type="inferred from homology"/>
<protein>
    <recommendedName>
        <fullName evidence="1">Alanine racemase</fullName>
        <ecNumber evidence="1">5.1.1.1</ecNumber>
    </recommendedName>
</protein>
<feature type="chain" id="PRO_1000164629" description="Alanine racemase">
    <location>
        <begin position="1"/>
        <end position="367"/>
    </location>
</feature>
<feature type="active site" description="Proton acceptor; specific for D-alanine" evidence="1">
    <location>
        <position position="40"/>
    </location>
</feature>
<feature type="active site" description="Proton acceptor; specific for L-alanine" evidence="1">
    <location>
        <position position="263"/>
    </location>
</feature>
<feature type="binding site" evidence="1">
    <location>
        <position position="136"/>
    </location>
    <ligand>
        <name>substrate</name>
    </ligand>
</feature>
<feature type="binding site" evidence="1">
    <location>
        <position position="310"/>
    </location>
    <ligand>
        <name>substrate</name>
    </ligand>
</feature>
<feature type="modified residue" description="N6-(pyridoxal phosphate)lysine" evidence="1">
    <location>
        <position position="40"/>
    </location>
</feature>